<accession>Q7M1F3</accession>
<feature type="chain" id="PRO_0000366950" description="Defensin-like protein 1">
    <location>
        <begin position="1"/>
        <end position="50"/>
    </location>
</feature>
<feature type="disulfide bond">
    <location>
        <begin position="2"/>
        <end position="50"/>
    </location>
</feature>
<feature type="disulfide bond">
    <location>
        <begin position="14"/>
        <end position="35"/>
    </location>
</feature>
<feature type="disulfide bond">
    <location>
        <begin position="20"/>
        <end position="44"/>
    </location>
</feature>
<feature type="disulfide bond">
    <location>
        <begin position="24"/>
        <end position="46"/>
    </location>
</feature>
<feature type="strand" evidence="5">
    <location>
        <begin position="3"/>
        <end position="5"/>
    </location>
</feature>
<feature type="strand" evidence="5">
    <location>
        <begin position="8"/>
        <end position="10"/>
    </location>
</feature>
<feature type="helix" evidence="5">
    <location>
        <begin position="17"/>
        <end position="25"/>
    </location>
</feature>
<feature type="strand" evidence="5">
    <location>
        <begin position="26"/>
        <end position="28"/>
    </location>
</feature>
<feature type="strand" evidence="5">
    <location>
        <begin position="31"/>
        <end position="38"/>
    </location>
</feature>
<feature type="strand" evidence="5">
    <location>
        <begin position="41"/>
        <end position="48"/>
    </location>
</feature>
<dbReference type="PIR" id="S66218">
    <property type="entry name" value="S66218"/>
</dbReference>
<dbReference type="PDB" id="1BK8">
    <property type="method" value="NMR"/>
    <property type="chains" value="A=1-50"/>
</dbReference>
<dbReference type="PDBsum" id="1BK8"/>
<dbReference type="BMRB" id="Q7M1F3"/>
<dbReference type="SMR" id="Q7M1F3"/>
<dbReference type="EvolutionaryTrace" id="Q7M1F3"/>
<dbReference type="GO" id="GO:0005576">
    <property type="term" value="C:extracellular region"/>
    <property type="evidence" value="ECO:0007669"/>
    <property type="project" value="UniProtKB-SubCell"/>
</dbReference>
<dbReference type="GO" id="GO:0050832">
    <property type="term" value="P:defense response to fungus"/>
    <property type="evidence" value="ECO:0007669"/>
    <property type="project" value="UniProtKB-KW"/>
</dbReference>
<dbReference type="GO" id="GO:0031640">
    <property type="term" value="P:killing of cells of another organism"/>
    <property type="evidence" value="ECO:0007669"/>
    <property type="project" value="UniProtKB-KW"/>
</dbReference>
<dbReference type="Gene3D" id="3.30.30.10">
    <property type="entry name" value="Knottin, scorpion toxin-like"/>
    <property type="match status" value="1"/>
</dbReference>
<dbReference type="InterPro" id="IPR003614">
    <property type="entry name" value="Scorpion_toxin-like"/>
</dbReference>
<dbReference type="InterPro" id="IPR036574">
    <property type="entry name" value="Scorpion_toxin-like_sf"/>
</dbReference>
<dbReference type="Pfam" id="PF00304">
    <property type="entry name" value="Gamma-thionin"/>
    <property type="match status" value="1"/>
</dbReference>
<dbReference type="SMART" id="SM00505">
    <property type="entry name" value="Knot1"/>
    <property type="match status" value="1"/>
</dbReference>
<dbReference type="SUPFAM" id="SSF57095">
    <property type="entry name" value="Scorpion toxin-like"/>
    <property type="match status" value="1"/>
</dbReference>
<comment type="function">
    <text evidence="2 3">Possesses antimicrobial activity sensitive to inorganic cations. Binds specifically to the fungal plasma membrane. Has no inhibitory effect on insect gut alpha-amylase.</text>
</comment>
<comment type="subcellular location">
    <subcellularLocation>
        <location evidence="1">Secreted</location>
    </subcellularLocation>
</comment>
<comment type="similarity">
    <text evidence="4">Belongs to the DEFL family.</text>
</comment>
<keyword id="KW-0002">3D-structure</keyword>
<keyword id="KW-0929">Antimicrobial</keyword>
<keyword id="KW-0903">Direct protein sequencing</keyword>
<keyword id="KW-1015">Disulfide bond</keyword>
<keyword id="KW-0295">Fungicide</keyword>
<keyword id="KW-0611">Plant defense</keyword>
<keyword id="KW-0964">Secreted</keyword>
<name>DEF1_AESHI</name>
<proteinExistence type="evidence at protein level"/>
<reference key="1">
    <citation type="journal article" date="1995" name="FEBS Lett.">
        <title>Isolation and characterisation of plant defensins from seeds of Asteraceae, Fabaceae, Hippocastanaceae and Saxifragaceae.</title>
        <authorList>
            <person name="Osborn R.W."/>
            <person name="De Samblanx G.W."/>
            <person name="Thevissen K."/>
            <person name="Goderis I."/>
            <person name="Torrekens S."/>
            <person name="Van Leuven F."/>
            <person name="Attenborough S."/>
            <person name="Rees S.B."/>
            <person name="Broekaert W.F."/>
        </authorList>
    </citation>
    <scope>PROTEIN SEQUENCE</scope>
    <scope>FUNCTION</scope>
    <source>
        <tissue>Seed</tissue>
    </source>
</reference>
<reference key="2">
    <citation type="journal article" date="1999" name="Proteins">
        <title>The three-dimensional solution structure of Aesculus hippocastanum antimicrobial protein 1 determined by 1H nuclear magnetic resonance.</title>
        <authorList>
            <person name="Fant F."/>
            <person name="Vranken W.F."/>
            <person name="Borremans F.A.M."/>
        </authorList>
    </citation>
    <scope>STRUCTURE BY NMR</scope>
</reference>
<reference key="3">
    <citation type="journal article" date="2000" name="Mol. Plant Microbe Interact.">
        <title>Specific binding sites for an antifungal plant defensin from Dahlia (Dahlia merckii) on fungal cells are required for antifungal activity.</title>
        <authorList>
            <person name="Thevissen K."/>
            <person name="Osborn R.W."/>
            <person name="Acland D.P."/>
            <person name="Broekaert W.F."/>
        </authorList>
    </citation>
    <scope>FUNCTION</scope>
</reference>
<sequence length="50" mass="5863">LCNERPSQTWSGNCGNTAHCDKQCQDWEKASHGACHKRENHWKCFCYFNC</sequence>
<organism>
    <name type="scientific">Aesculus hippocastanum</name>
    <name type="common">Horse chestnut</name>
    <dbReference type="NCBI Taxonomy" id="43364"/>
    <lineage>
        <taxon>Eukaryota</taxon>
        <taxon>Viridiplantae</taxon>
        <taxon>Streptophyta</taxon>
        <taxon>Embryophyta</taxon>
        <taxon>Tracheophyta</taxon>
        <taxon>Spermatophyta</taxon>
        <taxon>Magnoliopsida</taxon>
        <taxon>eudicotyledons</taxon>
        <taxon>Gunneridae</taxon>
        <taxon>Pentapetalae</taxon>
        <taxon>rosids</taxon>
        <taxon>malvids</taxon>
        <taxon>Sapindales</taxon>
        <taxon>Sapindaceae</taxon>
        <taxon>Hippocastanoideae</taxon>
        <taxon>Hippocastaneae</taxon>
        <taxon>Aesculus</taxon>
    </lineage>
</organism>
<evidence type="ECO:0000250" key="1"/>
<evidence type="ECO:0000269" key="2">
    <source>
    </source>
</evidence>
<evidence type="ECO:0000269" key="3">
    <source>
    </source>
</evidence>
<evidence type="ECO:0000305" key="4"/>
<evidence type="ECO:0007829" key="5">
    <source>
        <dbReference type="PDB" id="1BK8"/>
    </source>
</evidence>
<protein>
    <recommendedName>
        <fullName>Defensin-like protein 1</fullName>
    </recommendedName>
    <alternativeName>
        <fullName>Cysteine-rich antimicrobial protein 1</fullName>
    </alternativeName>
    <alternativeName>
        <fullName>Defensin AMP1</fullName>
        <shortName>AhAMP1</shortName>
    </alternativeName>
</protein>